<protein>
    <recommendedName>
        <fullName evidence="5">SMR domain-containing protein At5g58720</fullName>
    </recommendedName>
    <alternativeName>
        <fullName evidence="4">PRL1-interacting protein PIPC</fullName>
    </alternativeName>
</protein>
<comment type="subunit">
    <text evidence="3">Interacts with PRL1.</text>
</comment>
<comment type="alternative products">
    <event type="alternative splicing"/>
    <isoform>
        <id>O65573-1</id>
        <name>1</name>
        <sequence type="displayed"/>
    </isoform>
    <text evidence="5">A number of isoforms are produced. According to EST sequences.</text>
</comment>
<feature type="chain" id="PRO_0000434565" description="SMR domain-containing protein At5g58720">
    <location>
        <begin position="1"/>
        <end position="519"/>
    </location>
</feature>
<feature type="domain" description="Smr" evidence="1">
    <location>
        <begin position="428"/>
        <end position="502"/>
    </location>
</feature>
<feature type="region of interest" description="Disordered" evidence="2">
    <location>
        <begin position="1"/>
        <end position="47"/>
    </location>
</feature>
<feature type="region of interest" description="Disordered" evidence="2">
    <location>
        <begin position="92"/>
        <end position="128"/>
    </location>
</feature>
<feature type="compositionally biased region" description="Basic residues" evidence="2">
    <location>
        <begin position="1"/>
        <end position="15"/>
    </location>
</feature>
<feature type="compositionally biased region" description="Basic and acidic residues" evidence="2">
    <location>
        <begin position="28"/>
        <end position="47"/>
    </location>
</feature>
<feature type="compositionally biased region" description="Low complexity" evidence="2">
    <location>
        <begin position="98"/>
        <end position="127"/>
    </location>
</feature>
<feature type="sequence conflict" description="In Ref. 5; AAM62636." evidence="5" ref="5">
    <original>NF</original>
    <variation>KI</variation>
    <location>
        <begin position="52"/>
        <end position="53"/>
    </location>
</feature>
<feature type="sequence conflict" description="In Ref. 5; AAM62636." evidence="5" ref="5">
    <original>V</original>
    <variation>F</variation>
    <location>
        <position position="208"/>
    </location>
</feature>
<feature type="sequence conflict" description="In Ref. 5; AAM62636." evidence="5" ref="5">
    <original>D</original>
    <variation>N</variation>
    <location>
        <position position="219"/>
    </location>
</feature>
<feature type="sequence conflict" description="In Ref. 5; AAM62636." evidence="5" ref="5">
    <original>SQD</original>
    <variation>FQH</variation>
    <location>
        <begin position="284"/>
        <end position="286"/>
    </location>
</feature>
<accession>O65573</accession>
<accession>Q8LEH8</accession>
<name>Y5872_ARATH</name>
<proteinExistence type="evidence at protein level"/>
<reference key="1">
    <citation type="journal article" date="1999" name="Proc. Natl. Acad. Sci. U.S.A.">
        <title>Regulatory interaction of PRL1 WD protein with Arabidopsis SNF1-like protein kinases.</title>
        <authorList>
            <person name="Bhalerao R.P."/>
            <person name="Salchert K."/>
            <person name="Bako L."/>
            <person name="Oekresz L."/>
            <person name="Szabados L."/>
            <person name="Muranaka T."/>
            <person name="Machida Y."/>
            <person name="Schell J."/>
            <person name="Koncz C."/>
        </authorList>
    </citation>
    <scope>NUCLEOTIDE SEQUENCE [MRNA]</scope>
    <scope>INTERACTION WITH PRL1</scope>
    <source>
        <strain>cv. Columbia</strain>
    </source>
</reference>
<reference key="2">
    <citation type="journal article" date="2000" name="DNA Res.">
        <title>Structural analysis of Arabidopsis thaliana chromosome 5. X. Sequence features of the regions of 3,076,755 bp covered by sixty P1 and TAC clones.</title>
        <authorList>
            <person name="Sato S."/>
            <person name="Nakamura Y."/>
            <person name="Kaneko T."/>
            <person name="Katoh T."/>
            <person name="Asamizu E."/>
            <person name="Kotani H."/>
            <person name="Tabata S."/>
        </authorList>
    </citation>
    <scope>NUCLEOTIDE SEQUENCE [LARGE SCALE GENOMIC DNA]</scope>
    <source>
        <strain>cv. Columbia</strain>
    </source>
</reference>
<reference key="3">
    <citation type="journal article" date="2017" name="Plant J.">
        <title>Araport11: a complete reannotation of the Arabidopsis thaliana reference genome.</title>
        <authorList>
            <person name="Cheng C.Y."/>
            <person name="Krishnakumar V."/>
            <person name="Chan A.P."/>
            <person name="Thibaud-Nissen F."/>
            <person name="Schobel S."/>
            <person name="Town C.D."/>
        </authorList>
    </citation>
    <scope>GENOME REANNOTATION</scope>
    <source>
        <strain>cv. Columbia</strain>
    </source>
</reference>
<reference key="4">
    <citation type="journal article" date="2003" name="Science">
        <title>Empirical analysis of transcriptional activity in the Arabidopsis genome.</title>
        <authorList>
            <person name="Yamada K."/>
            <person name="Lim J."/>
            <person name="Dale J.M."/>
            <person name="Chen H."/>
            <person name="Shinn P."/>
            <person name="Palm C.J."/>
            <person name="Southwick A.M."/>
            <person name="Wu H.C."/>
            <person name="Kim C.J."/>
            <person name="Nguyen M."/>
            <person name="Pham P.K."/>
            <person name="Cheuk R.F."/>
            <person name="Karlin-Newmann G."/>
            <person name="Liu S.X."/>
            <person name="Lam B."/>
            <person name="Sakano H."/>
            <person name="Wu T."/>
            <person name="Yu G."/>
            <person name="Miranda M."/>
            <person name="Quach H.L."/>
            <person name="Tripp M."/>
            <person name="Chang C.H."/>
            <person name="Lee J.M."/>
            <person name="Toriumi M.J."/>
            <person name="Chan M.M."/>
            <person name="Tang C.C."/>
            <person name="Onodera C.S."/>
            <person name="Deng J.M."/>
            <person name="Akiyama K."/>
            <person name="Ansari Y."/>
            <person name="Arakawa T."/>
            <person name="Banh J."/>
            <person name="Banno F."/>
            <person name="Bowser L."/>
            <person name="Brooks S.Y."/>
            <person name="Carninci P."/>
            <person name="Chao Q."/>
            <person name="Choy N."/>
            <person name="Enju A."/>
            <person name="Goldsmith A.D."/>
            <person name="Gurjal M."/>
            <person name="Hansen N.F."/>
            <person name="Hayashizaki Y."/>
            <person name="Johnson-Hopson C."/>
            <person name="Hsuan V.W."/>
            <person name="Iida K."/>
            <person name="Karnes M."/>
            <person name="Khan S."/>
            <person name="Koesema E."/>
            <person name="Ishida J."/>
            <person name="Jiang P.X."/>
            <person name="Jones T."/>
            <person name="Kawai J."/>
            <person name="Kamiya A."/>
            <person name="Meyers C."/>
            <person name="Nakajima M."/>
            <person name="Narusaka M."/>
            <person name="Seki M."/>
            <person name="Sakurai T."/>
            <person name="Satou M."/>
            <person name="Tamse R."/>
            <person name="Vaysberg M."/>
            <person name="Wallender E.K."/>
            <person name="Wong C."/>
            <person name="Yamamura Y."/>
            <person name="Yuan S."/>
            <person name="Shinozaki K."/>
            <person name="Davis R.W."/>
            <person name="Theologis A."/>
            <person name="Ecker J.R."/>
        </authorList>
    </citation>
    <scope>NUCLEOTIDE SEQUENCE [LARGE SCALE MRNA]</scope>
    <source>
        <strain>cv. Columbia</strain>
    </source>
</reference>
<reference key="5">
    <citation type="submission" date="2002-03" db="EMBL/GenBank/DDBJ databases">
        <title>Full-length cDNA from Arabidopsis thaliana.</title>
        <authorList>
            <person name="Brover V.V."/>
            <person name="Troukhan M.E."/>
            <person name="Alexandrov N.A."/>
            <person name="Lu Y.-P."/>
            <person name="Flavell R.B."/>
            <person name="Feldmann K.A."/>
        </authorList>
    </citation>
    <scope>NUCLEOTIDE SEQUENCE [LARGE SCALE MRNA]</scope>
</reference>
<keyword id="KW-0025">Alternative splicing</keyword>
<keyword id="KW-1185">Reference proteome</keyword>
<dbReference type="EMBL" id="AJ006021">
    <property type="protein sequence ID" value="CAA06808.1"/>
    <property type="molecule type" value="mRNA"/>
</dbReference>
<dbReference type="EMBL" id="AB020755">
    <property type="protein sequence ID" value="BAA97340.1"/>
    <property type="molecule type" value="Genomic_DNA"/>
</dbReference>
<dbReference type="EMBL" id="CP002688">
    <property type="protein sequence ID" value="AED97089.1"/>
    <property type="molecule type" value="Genomic_DNA"/>
</dbReference>
<dbReference type="EMBL" id="AY062752">
    <property type="protein sequence ID" value="AAL32830.1"/>
    <property type="molecule type" value="mRNA"/>
</dbReference>
<dbReference type="EMBL" id="AY114674">
    <property type="protein sequence ID" value="AAM47993.1"/>
    <property type="molecule type" value="mRNA"/>
</dbReference>
<dbReference type="EMBL" id="AY085409">
    <property type="protein sequence ID" value="AAM62636.1"/>
    <property type="molecule type" value="mRNA"/>
</dbReference>
<dbReference type="PIR" id="T51367">
    <property type="entry name" value="T51367"/>
</dbReference>
<dbReference type="RefSeq" id="NP_200680.1">
    <molecule id="O65573-1"/>
    <property type="nucleotide sequence ID" value="NM_125259.4"/>
</dbReference>
<dbReference type="SMR" id="O65573"/>
<dbReference type="FunCoup" id="O65573">
    <property type="interactions" value="1388"/>
</dbReference>
<dbReference type="IntAct" id="O65573">
    <property type="interactions" value="25"/>
</dbReference>
<dbReference type="STRING" id="3702.O65573"/>
<dbReference type="PaxDb" id="3702-AT5G58720.1"/>
<dbReference type="ProteomicsDB" id="243170">
    <molecule id="O65573-1"/>
</dbReference>
<dbReference type="EnsemblPlants" id="AT5G58720.1">
    <molecule id="O65573-1"/>
    <property type="protein sequence ID" value="AT5G58720.1"/>
    <property type="gene ID" value="AT5G58720"/>
</dbReference>
<dbReference type="GeneID" id="835986"/>
<dbReference type="Gramene" id="AT5G58720.1">
    <molecule id="O65573-1"/>
    <property type="protein sequence ID" value="AT5G58720.1"/>
    <property type="gene ID" value="AT5G58720"/>
</dbReference>
<dbReference type="KEGG" id="ath:AT5G58720"/>
<dbReference type="Araport" id="AT5G58720"/>
<dbReference type="TAIR" id="AT5G58720"/>
<dbReference type="eggNOG" id="KOG2401">
    <property type="taxonomic scope" value="Eukaryota"/>
</dbReference>
<dbReference type="HOGENOM" id="CLU_024477_0_0_1"/>
<dbReference type="InParanoid" id="O65573"/>
<dbReference type="OMA" id="IPEQRTY"/>
<dbReference type="OrthoDB" id="3231855at2759"/>
<dbReference type="PhylomeDB" id="O65573"/>
<dbReference type="PRO" id="PR:O65573"/>
<dbReference type="Proteomes" id="UP000006548">
    <property type="component" value="Chromosome 5"/>
</dbReference>
<dbReference type="ExpressionAtlas" id="O65573">
    <property type="expression patterns" value="baseline and differential"/>
</dbReference>
<dbReference type="Gene3D" id="3.30.1370.110">
    <property type="match status" value="1"/>
</dbReference>
<dbReference type="InterPro" id="IPR055319">
    <property type="entry name" value="At5g58720-like"/>
</dbReference>
<dbReference type="InterPro" id="IPR056254">
    <property type="entry name" value="At5g58720/SDE5-like_UBA-like"/>
</dbReference>
<dbReference type="InterPro" id="IPR013899">
    <property type="entry name" value="DUF1771"/>
</dbReference>
<dbReference type="InterPro" id="IPR002625">
    <property type="entry name" value="Smr_dom"/>
</dbReference>
<dbReference type="InterPro" id="IPR036063">
    <property type="entry name" value="Smr_dom_sf"/>
</dbReference>
<dbReference type="PANTHER" id="PTHR47676">
    <property type="entry name" value="OS01G0225100 PROTEIN"/>
    <property type="match status" value="1"/>
</dbReference>
<dbReference type="PANTHER" id="PTHR47676:SF1">
    <property type="entry name" value="SMR DOMAIN-CONTAINING PROTEIN"/>
    <property type="match status" value="1"/>
</dbReference>
<dbReference type="Pfam" id="PF08590">
    <property type="entry name" value="DUF1771"/>
    <property type="match status" value="1"/>
</dbReference>
<dbReference type="Pfam" id="PF24767">
    <property type="entry name" value="UBA_At5g58720"/>
    <property type="match status" value="1"/>
</dbReference>
<dbReference type="SMART" id="SM01162">
    <property type="entry name" value="DUF1771"/>
    <property type="match status" value="1"/>
</dbReference>
<dbReference type="SMART" id="SM00463">
    <property type="entry name" value="SMR"/>
    <property type="match status" value="1"/>
</dbReference>
<dbReference type="SUPFAM" id="SSF160443">
    <property type="entry name" value="SMR domain-like"/>
    <property type="match status" value="1"/>
</dbReference>
<dbReference type="PROSITE" id="PS50828">
    <property type="entry name" value="SMR"/>
    <property type="match status" value="1"/>
</dbReference>
<gene>
    <name evidence="4" type="primary">PIPC</name>
    <name evidence="6" type="ordered locus">At5g58720</name>
    <name evidence="7" type="ORF">MZN1.16</name>
</gene>
<organism>
    <name type="scientific">Arabidopsis thaliana</name>
    <name type="common">Mouse-ear cress</name>
    <dbReference type="NCBI Taxonomy" id="3702"/>
    <lineage>
        <taxon>Eukaryota</taxon>
        <taxon>Viridiplantae</taxon>
        <taxon>Streptophyta</taxon>
        <taxon>Embryophyta</taxon>
        <taxon>Tracheophyta</taxon>
        <taxon>Spermatophyta</taxon>
        <taxon>Magnoliopsida</taxon>
        <taxon>eudicotyledons</taxon>
        <taxon>Gunneridae</taxon>
        <taxon>Pentapetalae</taxon>
        <taxon>rosids</taxon>
        <taxon>malvids</taxon>
        <taxon>Brassicales</taxon>
        <taxon>Brassicaceae</taxon>
        <taxon>Camelineae</taxon>
        <taxon>Arabidopsis</taxon>
    </lineage>
</organism>
<evidence type="ECO:0000255" key="1">
    <source>
        <dbReference type="PROSITE-ProRule" id="PRU00321"/>
    </source>
</evidence>
<evidence type="ECO:0000256" key="2">
    <source>
        <dbReference type="SAM" id="MobiDB-lite"/>
    </source>
</evidence>
<evidence type="ECO:0000269" key="3">
    <source>
    </source>
</evidence>
<evidence type="ECO:0000303" key="4">
    <source>
    </source>
</evidence>
<evidence type="ECO:0000305" key="5"/>
<evidence type="ECO:0000312" key="6">
    <source>
        <dbReference type="Araport" id="AT5G58720"/>
    </source>
</evidence>
<evidence type="ECO:0000312" key="7">
    <source>
        <dbReference type="EMBL" id="AAL32830.1"/>
    </source>
</evidence>
<sequence>MKQKNQHKKKKKRSCAAKPSGDGTTSDGNKKDVEEERKDGEGKREIENVGKNFIESLMEAFCSVSMEEAMAAYKEAGGDLNKAAEILSDLVESGDDPSTSSVASGSSGQETASTSEYGAGSSSSCSEDLTRDRWFKGSKQSRVIAATGMVSSVIAKDYLKPNPVRKEFPMMERSKELCGNGKKAADREKAEQFLSSMLGDDCELSMAVVRDVLCQCGYDVDMALNVLLDMSSSSTDDSLSGKCFGIGVSDSLAESSFDTDTSDCELFWGGDYSQRDYAKALMSSQDPFATTQGIDELGLPQKVLESLFNIRQNPKHESKTTSWRNVAKKMQSLGIDASSSSGEEPHPNTFVKDDSYHELRKGANDQWNVTKSYYQKAAEAYSKGGRAHAAYLSDKGRVASKQAQRADERASQDIFVARNKGIENVVTIDLHGQHVKPAMKLLKLHLLFGSYVPSIQTLRVITGCGASGFGKSKVKQSVVKLLEREGVRYCEENRGTLLIKLDGGSREFSFLDTESDSDE</sequence>